<proteinExistence type="evidence at transcript level"/>
<evidence type="ECO:0000250" key="1">
    <source>
        <dbReference type="UniProtKB" id="P28002"/>
    </source>
</evidence>
<evidence type="ECO:0000250" key="2">
    <source>
        <dbReference type="UniProtKB" id="Q9LPU5"/>
    </source>
</evidence>
<evidence type="ECO:0000255" key="3">
    <source>
        <dbReference type="PROSITE-ProRule" id="PRU01020"/>
    </source>
</evidence>
<evidence type="ECO:0000305" key="4"/>
<evidence type="ECO:0000312" key="5">
    <source>
        <dbReference type="Araport" id="AT1G21110"/>
    </source>
</evidence>
<evidence type="ECO:0000312" key="6">
    <source>
        <dbReference type="EMBL" id="AAF80650.1"/>
    </source>
</evidence>
<protein>
    <recommendedName>
        <fullName evidence="4">Indole glucosinolate O-methyltransferase 3</fullName>
        <ecNumber evidence="4">2.1.1.-</ecNumber>
    </recommendedName>
</protein>
<accession>Q9LPU6</accession>
<name>IGMT3_ARATH</name>
<sequence length="373" mass="40935">MGYLFEETLSSNPKTPIVVDDDNELGLMAVRLANAAAFPMVLKASLELGVFDTLYAEASRTDSFLSPSEIASKLPTTPRNPGAPVLLDRMLRLLASYSMVKCEKVSVGKEQRVYRAEPICRFFLKNNIQDIGSLASQVIVNFDSVFLNTWAQLKDVVLEGGDAFGRAHGGMKLFDYMGTDERFSKLFNQTGFTIAVVKKALEVYQGFKGVNVLVDVGGGVGNTLGVVTSKYPNIKGINFDLTCALAQAPTYPGVEHVAGDMFVDVPTGNAMILKRILHDWTDEDCVKILKNCWKSLPQNGKVVVIELVTPDEAENGDINANIAFDMDMLMFTQCSGGKERSRAEFEALAAASGFSHCQFVCQAYHCWIIEFCK</sequence>
<keyword id="KW-0489">Methyltransferase</keyword>
<keyword id="KW-1185">Reference proteome</keyword>
<keyword id="KW-0949">S-adenosyl-L-methionine</keyword>
<keyword id="KW-0808">Transferase</keyword>
<feature type="chain" id="PRO_0000435497" description="Indole glucosinolate O-methyltransferase 3">
    <location>
        <begin position="1"/>
        <end position="373"/>
    </location>
</feature>
<feature type="active site" description="Proton acceptor" evidence="1 3">
    <location>
        <position position="278"/>
    </location>
</feature>
<feature type="binding site" evidence="1">
    <location>
        <position position="217"/>
    </location>
    <ligand>
        <name>S-adenosyl-L-homocysteine</name>
        <dbReference type="ChEBI" id="CHEBI:57856"/>
    </ligand>
</feature>
<feature type="binding site" evidence="1">
    <location>
        <position position="240"/>
    </location>
    <ligand>
        <name>S-adenosyl-L-homocysteine</name>
        <dbReference type="ChEBI" id="CHEBI:57856"/>
    </ligand>
</feature>
<feature type="binding site" evidence="1">
    <location>
        <position position="260"/>
    </location>
    <ligand>
        <name>S-adenosyl-L-homocysteine</name>
        <dbReference type="ChEBI" id="CHEBI:57856"/>
    </ligand>
</feature>
<feature type="binding site" evidence="1">
    <location>
        <position position="261"/>
    </location>
    <ligand>
        <name>S-adenosyl-L-homocysteine</name>
        <dbReference type="ChEBI" id="CHEBI:57856"/>
    </ligand>
</feature>
<feature type="binding site" evidence="1">
    <location>
        <position position="274"/>
    </location>
    <ligand>
        <name>S-adenosyl-L-homocysteine</name>
        <dbReference type="ChEBI" id="CHEBI:57856"/>
    </ligand>
</feature>
<comment type="function">
    <text evidence="2">Involved in indole glucosinolate biosynthesis. Catalyzes methoxylation reactions of the glucosinolate indole ring. Converts the hydroxy intermediates 4-hydroxy-indol-3-yl-methylglucosinolate (4OH-I3M) and 1-hydroxy-indol-3-yl-methylglucosinolate (1OH-I3M) to 4-methoxy-indol-3-yl-methylglucosinolate (4MO-I3M) and 1-methoxy-indol-3-yl-methylglucosinolate(1MO-I3M), respectively.</text>
</comment>
<comment type="pathway">
    <text evidence="4">Secondary metabolite biosynthesis.</text>
</comment>
<comment type="similarity">
    <text evidence="3">Belongs to the class I-like SAM-binding methyltransferase superfamily. Cation-independent O-methyltransferase family.</text>
</comment>
<dbReference type="EC" id="2.1.1.-" evidence="4"/>
<dbReference type="EMBL" id="AC012190">
    <property type="protein sequence ID" value="AAF80650.1"/>
    <property type="molecule type" value="Genomic_DNA"/>
</dbReference>
<dbReference type="EMBL" id="CP002684">
    <property type="protein sequence ID" value="AEE30065.1"/>
    <property type="molecule type" value="Genomic_DNA"/>
</dbReference>
<dbReference type="EMBL" id="AK118791">
    <property type="protein sequence ID" value="BAC43382.1"/>
    <property type="molecule type" value="mRNA"/>
</dbReference>
<dbReference type="EMBL" id="BT005546">
    <property type="protein sequence ID" value="AAO63966.1"/>
    <property type="molecule type" value="mRNA"/>
</dbReference>
<dbReference type="PIR" id="C86344">
    <property type="entry name" value="C86344"/>
</dbReference>
<dbReference type="RefSeq" id="NP_173535.1">
    <property type="nucleotide sequence ID" value="NM_101965.3"/>
</dbReference>
<dbReference type="SMR" id="Q9LPU6"/>
<dbReference type="FunCoup" id="Q9LPU6">
    <property type="interactions" value="434"/>
</dbReference>
<dbReference type="STRING" id="3702.Q9LPU6"/>
<dbReference type="PaxDb" id="3702-AT1G21110.1"/>
<dbReference type="EnsemblPlants" id="AT1G21110.1">
    <property type="protein sequence ID" value="AT1G21110.1"/>
    <property type="gene ID" value="AT1G21110"/>
</dbReference>
<dbReference type="GeneID" id="838707"/>
<dbReference type="Gramene" id="AT1G21110.1">
    <property type="protein sequence ID" value="AT1G21110.1"/>
    <property type="gene ID" value="AT1G21110"/>
</dbReference>
<dbReference type="KEGG" id="ath:AT1G21110"/>
<dbReference type="Araport" id="AT1G21110"/>
<dbReference type="TAIR" id="AT1G21110">
    <property type="gene designation" value="IGMT3"/>
</dbReference>
<dbReference type="eggNOG" id="KOG3178">
    <property type="taxonomic scope" value="Eukaryota"/>
</dbReference>
<dbReference type="HOGENOM" id="CLU_005533_12_1_1"/>
<dbReference type="InParanoid" id="Q9LPU6"/>
<dbReference type="OMA" id="DIWIMEF"/>
<dbReference type="PhylomeDB" id="Q9LPU6"/>
<dbReference type="BioCyc" id="ARA:AT1G21110-MONOMER"/>
<dbReference type="PRO" id="PR:Q9LPU6"/>
<dbReference type="Proteomes" id="UP000006548">
    <property type="component" value="Chromosome 1"/>
</dbReference>
<dbReference type="GO" id="GO:0008171">
    <property type="term" value="F:O-methyltransferase activity"/>
    <property type="evidence" value="ECO:0007669"/>
    <property type="project" value="InterPro"/>
</dbReference>
<dbReference type="GO" id="GO:0046983">
    <property type="term" value="F:protein dimerization activity"/>
    <property type="evidence" value="ECO:0007669"/>
    <property type="project" value="InterPro"/>
</dbReference>
<dbReference type="GO" id="GO:1990110">
    <property type="term" value="P:callus formation"/>
    <property type="evidence" value="ECO:0000315"/>
    <property type="project" value="TAIR"/>
</dbReference>
<dbReference type="GO" id="GO:0032259">
    <property type="term" value="P:methylation"/>
    <property type="evidence" value="ECO:0007669"/>
    <property type="project" value="UniProtKB-KW"/>
</dbReference>
<dbReference type="FunFam" id="1.10.10.10:FF:000357">
    <property type="entry name" value="Caffeic acid 3-O-methyltransferase"/>
    <property type="match status" value="1"/>
</dbReference>
<dbReference type="FunFam" id="3.40.50.150:FF:000061">
    <property type="entry name" value="Caffeic acid O-methyltransferase"/>
    <property type="match status" value="1"/>
</dbReference>
<dbReference type="Gene3D" id="3.40.50.150">
    <property type="entry name" value="Vaccinia Virus protein VP39"/>
    <property type="match status" value="1"/>
</dbReference>
<dbReference type="Gene3D" id="1.10.10.10">
    <property type="entry name" value="Winged helix-like DNA-binding domain superfamily/Winged helix DNA-binding domain"/>
    <property type="match status" value="1"/>
</dbReference>
<dbReference type="InterPro" id="IPR016461">
    <property type="entry name" value="COMT-like"/>
</dbReference>
<dbReference type="InterPro" id="IPR001077">
    <property type="entry name" value="O_MeTrfase_dom"/>
</dbReference>
<dbReference type="InterPro" id="IPR012967">
    <property type="entry name" value="Plant_O-MeTrfase_dimerisation"/>
</dbReference>
<dbReference type="InterPro" id="IPR029063">
    <property type="entry name" value="SAM-dependent_MTases_sf"/>
</dbReference>
<dbReference type="InterPro" id="IPR036388">
    <property type="entry name" value="WH-like_DNA-bd_sf"/>
</dbReference>
<dbReference type="InterPro" id="IPR036390">
    <property type="entry name" value="WH_DNA-bd_sf"/>
</dbReference>
<dbReference type="PANTHER" id="PTHR11746">
    <property type="entry name" value="O-METHYLTRANSFERASE"/>
    <property type="match status" value="1"/>
</dbReference>
<dbReference type="Pfam" id="PF08100">
    <property type="entry name" value="Dimerisation"/>
    <property type="match status" value="1"/>
</dbReference>
<dbReference type="Pfam" id="PF00891">
    <property type="entry name" value="Methyltransf_2"/>
    <property type="match status" value="1"/>
</dbReference>
<dbReference type="PIRSF" id="PIRSF005739">
    <property type="entry name" value="O-mtase"/>
    <property type="match status" value="1"/>
</dbReference>
<dbReference type="SUPFAM" id="SSF53335">
    <property type="entry name" value="S-adenosyl-L-methionine-dependent methyltransferases"/>
    <property type="match status" value="1"/>
</dbReference>
<dbReference type="SUPFAM" id="SSF46785">
    <property type="entry name" value="Winged helix' DNA-binding domain"/>
    <property type="match status" value="1"/>
</dbReference>
<dbReference type="PROSITE" id="PS51683">
    <property type="entry name" value="SAM_OMT_II"/>
    <property type="match status" value="1"/>
</dbReference>
<reference key="1">
    <citation type="journal article" date="2000" name="Nature">
        <title>Sequence and analysis of chromosome 1 of the plant Arabidopsis thaliana.</title>
        <authorList>
            <person name="Theologis A."/>
            <person name="Ecker J.R."/>
            <person name="Palm C.J."/>
            <person name="Federspiel N.A."/>
            <person name="Kaul S."/>
            <person name="White O."/>
            <person name="Alonso J."/>
            <person name="Altafi H."/>
            <person name="Araujo R."/>
            <person name="Bowman C.L."/>
            <person name="Brooks S.Y."/>
            <person name="Buehler E."/>
            <person name="Chan A."/>
            <person name="Chao Q."/>
            <person name="Chen H."/>
            <person name="Cheuk R.F."/>
            <person name="Chin C.W."/>
            <person name="Chung M.K."/>
            <person name="Conn L."/>
            <person name="Conway A.B."/>
            <person name="Conway A.R."/>
            <person name="Creasy T.H."/>
            <person name="Dewar K."/>
            <person name="Dunn P."/>
            <person name="Etgu P."/>
            <person name="Feldblyum T.V."/>
            <person name="Feng J.-D."/>
            <person name="Fong B."/>
            <person name="Fujii C.Y."/>
            <person name="Gill J.E."/>
            <person name="Goldsmith A.D."/>
            <person name="Haas B."/>
            <person name="Hansen N.F."/>
            <person name="Hughes B."/>
            <person name="Huizar L."/>
            <person name="Hunter J.L."/>
            <person name="Jenkins J."/>
            <person name="Johnson-Hopson C."/>
            <person name="Khan S."/>
            <person name="Khaykin E."/>
            <person name="Kim C.J."/>
            <person name="Koo H.L."/>
            <person name="Kremenetskaia I."/>
            <person name="Kurtz D.B."/>
            <person name="Kwan A."/>
            <person name="Lam B."/>
            <person name="Langin-Hooper S."/>
            <person name="Lee A."/>
            <person name="Lee J.M."/>
            <person name="Lenz C.A."/>
            <person name="Li J.H."/>
            <person name="Li Y.-P."/>
            <person name="Lin X."/>
            <person name="Liu S.X."/>
            <person name="Liu Z.A."/>
            <person name="Luros J.S."/>
            <person name="Maiti R."/>
            <person name="Marziali A."/>
            <person name="Militscher J."/>
            <person name="Miranda M."/>
            <person name="Nguyen M."/>
            <person name="Nierman W.C."/>
            <person name="Osborne B.I."/>
            <person name="Pai G."/>
            <person name="Peterson J."/>
            <person name="Pham P.K."/>
            <person name="Rizzo M."/>
            <person name="Rooney T."/>
            <person name="Rowley D."/>
            <person name="Sakano H."/>
            <person name="Salzberg S.L."/>
            <person name="Schwartz J.R."/>
            <person name="Shinn P."/>
            <person name="Southwick A.M."/>
            <person name="Sun H."/>
            <person name="Tallon L.J."/>
            <person name="Tambunga G."/>
            <person name="Toriumi M.J."/>
            <person name="Town C.D."/>
            <person name="Utterback T."/>
            <person name="Van Aken S."/>
            <person name="Vaysberg M."/>
            <person name="Vysotskaia V.S."/>
            <person name="Walker M."/>
            <person name="Wu D."/>
            <person name="Yu G."/>
            <person name="Fraser C.M."/>
            <person name="Venter J.C."/>
            <person name="Davis R.W."/>
        </authorList>
    </citation>
    <scope>NUCLEOTIDE SEQUENCE [LARGE SCALE GENOMIC DNA]</scope>
    <source>
        <strain>cv. Columbia</strain>
    </source>
</reference>
<reference key="2">
    <citation type="journal article" date="2017" name="Plant J.">
        <title>Araport11: a complete reannotation of the Arabidopsis thaliana reference genome.</title>
        <authorList>
            <person name="Cheng C.Y."/>
            <person name="Krishnakumar V."/>
            <person name="Chan A.P."/>
            <person name="Thibaud-Nissen F."/>
            <person name="Schobel S."/>
            <person name="Town C.D."/>
        </authorList>
    </citation>
    <scope>GENOME REANNOTATION</scope>
    <source>
        <strain>cv. Columbia</strain>
    </source>
</reference>
<reference key="3">
    <citation type="journal article" date="2002" name="Science">
        <title>Functional annotation of a full-length Arabidopsis cDNA collection.</title>
        <authorList>
            <person name="Seki M."/>
            <person name="Narusaka M."/>
            <person name="Kamiya A."/>
            <person name="Ishida J."/>
            <person name="Satou M."/>
            <person name="Sakurai T."/>
            <person name="Nakajima M."/>
            <person name="Enju A."/>
            <person name="Akiyama K."/>
            <person name="Oono Y."/>
            <person name="Muramatsu M."/>
            <person name="Hayashizaki Y."/>
            <person name="Kawai J."/>
            <person name="Carninci P."/>
            <person name="Itoh M."/>
            <person name="Ishii Y."/>
            <person name="Arakawa T."/>
            <person name="Shibata K."/>
            <person name="Shinagawa A."/>
            <person name="Shinozaki K."/>
        </authorList>
    </citation>
    <scope>NUCLEOTIDE SEQUENCE [LARGE SCALE MRNA]</scope>
    <source>
        <strain>cv. Columbia</strain>
    </source>
</reference>
<reference key="4">
    <citation type="journal article" date="2003" name="Science">
        <title>Empirical analysis of transcriptional activity in the Arabidopsis genome.</title>
        <authorList>
            <person name="Yamada K."/>
            <person name="Lim J."/>
            <person name="Dale J.M."/>
            <person name="Chen H."/>
            <person name="Shinn P."/>
            <person name="Palm C.J."/>
            <person name="Southwick A.M."/>
            <person name="Wu H.C."/>
            <person name="Kim C.J."/>
            <person name="Nguyen M."/>
            <person name="Pham P.K."/>
            <person name="Cheuk R.F."/>
            <person name="Karlin-Newmann G."/>
            <person name="Liu S.X."/>
            <person name="Lam B."/>
            <person name="Sakano H."/>
            <person name="Wu T."/>
            <person name="Yu G."/>
            <person name="Miranda M."/>
            <person name="Quach H.L."/>
            <person name="Tripp M."/>
            <person name="Chang C.H."/>
            <person name="Lee J.M."/>
            <person name="Toriumi M.J."/>
            <person name="Chan M.M."/>
            <person name="Tang C.C."/>
            <person name="Onodera C.S."/>
            <person name="Deng J.M."/>
            <person name="Akiyama K."/>
            <person name="Ansari Y."/>
            <person name="Arakawa T."/>
            <person name="Banh J."/>
            <person name="Banno F."/>
            <person name="Bowser L."/>
            <person name="Brooks S.Y."/>
            <person name="Carninci P."/>
            <person name="Chao Q."/>
            <person name="Choy N."/>
            <person name="Enju A."/>
            <person name="Goldsmith A.D."/>
            <person name="Gurjal M."/>
            <person name="Hansen N.F."/>
            <person name="Hayashizaki Y."/>
            <person name="Johnson-Hopson C."/>
            <person name="Hsuan V.W."/>
            <person name="Iida K."/>
            <person name="Karnes M."/>
            <person name="Khan S."/>
            <person name="Koesema E."/>
            <person name="Ishida J."/>
            <person name="Jiang P.X."/>
            <person name="Jones T."/>
            <person name="Kawai J."/>
            <person name="Kamiya A."/>
            <person name="Meyers C."/>
            <person name="Nakajima M."/>
            <person name="Narusaka M."/>
            <person name="Seki M."/>
            <person name="Sakurai T."/>
            <person name="Satou M."/>
            <person name="Tamse R."/>
            <person name="Vaysberg M."/>
            <person name="Wallender E.K."/>
            <person name="Wong C."/>
            <person name="Yamamura Y."/>
            <person name="Yuan S."/>
            <person name="Shinozaki K."/>
            <person name="Davis R.W."/>
            <person name="Theologis A."/>
            <person name="Ecker J.R."/>
        </authorList>
    </citation>
    <scope>NUCLEOTIDE SEQUENCE [LARGE SCALE MRNA]</scope>
    <source>
        <strain>cv. Columbia</strain>
    </source>
</reference>
<gene>
    <name evidence="4" type="primary">IGMT3</name>
    <name evidence="5" type="ordered locus">At1g21110</name>
    <name evidence="6" type="ORF">T22I11.6</name>
</gene>
<organism>
    <name type="scientific">Arabidopsis thaliana</name>
    <name type="common">Mouse-ear cress</name>
    <dbReference type="NCBI Taxonomy" id="3702"/>
    <lineage>
        <taxon>Eukaryota</taxon>
        <taxon>Viridiplantae</taxon>
        <taxon>Streptophyta</taxon>
        <taxon>Embryophyta</taxon>
        <taxon>Tracheophyta</taxon>
        <taxon>Spermatophyta</taxon>
        <taxon>Magnoliopsida</taxon>
        <taxon>eudicotyledons</taxon>
        <taxon>Gunneridae</taxon>
        <taxon>Pentapetalae</taxon>
        <taxon>rosids</taxon>
        <taxon>malvids</taxon>
        <taxon>Brassicales</taxon>
        <taxon>Brassicaceae</taxon>
        <taxon>Camelineae</taxon>
        <taxon>Arabidopsis</taxon>
    </lineage>
</organism>